<accession>Q8E5W9</accession>
<organism>
    <name type="scientific">Streptococcus agalactiae serotype III (strain NEM316)</name>
    <dbReference type="NCBI Taxonomy" id="211110"/>
    <lineage>
        <taxon>Bacteria</taxon>
        <taxon>Bacillati</taxon>
        <taxon>Bacillota</taxon>
        <taxon>Bacilli</taxon>
        <taxon>Lactobacillales</taxon>
        <taxon>Streptococcaceae</taxon>
        <taxon>Streptococcus</taxon>
    </lineage>
</organism>
<proteinExistence type="inferred from homology"/>
<feature type="chain" id="PRO_0000157051" description="Thiamine-phosphate synthase">
    <location>
        <begin position="1"/>
        <end position="223"/>
    </location>
</feature>
<feature type="binding site" evidence="1">
    <location>
        <begin position="37"/>
        <end position="41"/>
    </location>
    <ligand>
        <name>4-amino-2-methyl-5-(diphosphooxymethyl)pyrimidine</name>
        <dbReference type="ChEBI" id="CHEBI:57841"/>
    </ligand>
</feature>
<feature type="binding site" evidence="1">
    <location>
        <position position="72"/>
    </location>
    <ligand>
        <name>4-amino-2-methyl-5-(diphosphooxymethyl)pyrimidine</name>
        <dbReference type="ChEBI" id="CHEBI:57841"/>
    </ligand>
</feature>
<feature type="binding site" evidence="1">
    <location>
        <position position="73"/>
    </location>
    <ligand>
        <name>Mg(2+)</name>
        <dbReference type="ChEBI" id="CHEBI:18420"/>
    </ligand>
</feature>
<feature type="binding site" evidence="1">
    <location>
        <position position="92"/>
    </location>
    <ligand>
        <name>Mg(2+)</name>
        <dbReference type="ChEBI" id="CHEBI:18420"/>
    </ligand>
</feature>
<feature type="binding site" evidence="1">
    <location>
        <position position="110"/>
    </location>
    <ligand>
        <name>4-amino-2-methyl-5-(diphosphooxymethyl)pyrimidine</name>
        <dbReference type="ChEBI" id="CHEBI:57841"/>
    </ligand>
</feature>
<feature type="binding site" evidence="1">
    <location>
        <begin position="136"/>
        <end position="138"/>
    </location>
    <ligand>
        <name>2-[(2R,5Z)-2-carboxy-4-methylthiazol-5(2H)-ylidene]ethyl phosphate</name>
        <dbReference type="ChEBI" id="CHEBI:62899"/>
    </ligand>
</feature>
<feature type="binding site" evidence="1">
    <location>
        <position position="139"/>
    </location>
    <ligand>
        <name>4-amino-2-methyl-5-(diphosphooxymethyl)pyrimidine</name>
        <dbReference type="ChEBI" id="CHEBI:57841"/>
    </ligand>
</feature>
<feature type="binding site" evidence="1">
    <location>
        <position position="168"/>
    </location>
    <ligand>
        <name>2-[(2R,5Z)-2-carboxy-4-methylthiazol-5(2H)-ylidene]ethyl phosphate</name>
        <dbReference type="ChEBI" id="CHEBI:62899"/>
    </ligand>
</feature>
<feature type="binding site" evidence="1">
    <location>
        <begin position="188"/>
        <end position="189"/>
    </location>
    <ligand>
        <name>2-[(2R,5Z)-2-carboxy-4-methylthiazol-5(2H)-ylidene]ethyl phosphate</name>
        <dbReference type="ChEBI" id="CHEBI:62899"/>
    </ligand>
</feature>
<sequence>MKDTLKLYFVCGTVDCSRKNILTVVEEALQAGITLFQFREKGFTALQGKEKIAMAKQLQILCKQYQVPFIIDDDIDLVELIDADGLHIGQNDLPVDEARRRLPDKIIGLSVSTMAEYQKSQLSVVDYIGIGPFNPTQSKADAKPAVGNRTTKAVREINQDIPIVAIGGITSDFVHDIIESGADGIAVISAISKANHIVDATRQLRYEVEKALVNRQKRSDVIK</sequence>
<keyword id="KW-0460">Magnesium</keyword>
<keyword id="KW-0479">Metal-binding</keyword>
<keyword id="KW-0784">Thiamine biosynthesis</keyword>
<keyword id="KW-0808">Transferase</keyword>
<dbReference type="EC" id="2.5.1.3" evidence="1"/>
<dbReference type="EMBL" id="AL766847">
    <property type="protein sequence ID" value="CAD46504.1"/>
    <property type="molecule type" value="Genomic_DNA"/>
</dbReference>
<dbReference type="RefSeq" id="WP_000655659.1">
    <property type="nucleotide sequence ID" value="NC_004368.1"/>
</dbReference>
<dbReference type="SMR" id="Q8E5W9"/>
<dbReference type="KEGG" id="san:gbs0860"/>
<dbReference type="eggNOG" id="COG0352">
    <property type="taxonomic scope" value="Bacteria"/>
</dbReference>
<dbReference type="HOGENOM" id="CLU_018272_3_2_9"/>
<dbReference type="UniPathway" id="UPA00060">
    <property type="reaction ID" value="UER00141"/>
</dbReference>
<dbReference type="Proteomes" id="UP000000823">
    <property type="component" value="Chromosome"/>
</dbReference>
<dbReference type="GO" id="GO:0005737">
    <property type="term" value="C:cytoplasm"/>
    <property type="evidence" value="ECO:0007669"/>
    <property type="project" value="TreeGrafter"/>
</dbReference>
<dbReference type="GO" id="GO:0000287">
    <property type="term" value="F:magnesium ion binding"/>
    <property type="evidence" value="ECO:0007669"/>
    <property type="project" value="UniProtKB-UniRule"/>
</dbReference>
<dbReference type="GO" id="GO:0004789">
    <property type="term" value="F:thiamine-phosphate diphosphorylase activity"/>
    <property type="evidence" value="ECO:0007669"/>
    <property type="project" value="UniProtKB-UniRule"/>
</dbReference>
<dbReference type="GO" id="GO:0009228">
    <property type="term" value="P:thiamine biosynthetic process"/>
    <property type="evidence" value="ECO:0007669"/>
    <property type="project" value="UniProtKB-KW"/>
</dbReference>
<dbReference type="GO" id="GO:0009229">
    <property type="term" value="P:thiamine diphosphate biosynthetic process"/>
    <property type="evidence" value="ECO:0007669"/>
    <property type="project" value="UniProtKB-UniRule"/>
</dbReference>
<dbReference type="CDD" id="cd00564">
    <property type="entry name" value="TMP_TenI"/>
    <property type="match status" value="1"/>
</dbReference>
<dbReference type="FunFam" id="3.20.20.70:FF:000096">
    <property type="entry name" value="Thiamine-phosphate synthase"/>
    <property type="match status" value="1"/>
</dbReference>
<dbReference type="Gene3D" id="3.20.20.70">
    <property type="entry name" value="Aldolase class I"/>
    <property type="match status" value="1"/>
</dbReference>
<dbReference type="HAMAP" id="MF_00097">
    <property type="entry name" value="TMP_synthase"/>
    <property type="match status" value="1"/>
</dbReference>
<dbReference type="InterPro" id="IPR013785">
    <property type="entry name" value="Aldolase_TIM"/>
</dbReference>
<dbReference type="InterPro" id="IPR036206">
    <property type="entry name" value="ThiamineP_synth_sf"/>
</dbReference>
<dbReference type="InterPro" id="IPR022998">
    <property type="entry name" value="ThiamineP_synth_TenI"/>
</dbReference>
<dbReference type="InterPro" id="IPR034291">
    <property type="entry name" value="TMP_synthase"/>
</dbReference>
<dbReference type="NCBIfam" id="TIGR00693">
    <property type="entry name" value="thiE"/>
    <property type="match status" value="1"/>
</dbReference>
<dbReference type="PANTHER" id="PTHR20857">
    <property type="entry name" value="THIAMINE-PHOSPHATE PYROPHOSPHORYLASE"/>
    <property type="match status" value="1"/>
</dbReference>
<dbReference type="PANTHER" id="PTHR20857:SF15">
    <property type="entry name" value="THIAMINE-PHOSPHATE SYNTHASE"/>
    <property type="match status" value="1"/>
</dbReference>
<dbReference type="Pfam" id="PF02581">
    <property type="entry name" value="TMP-TENI"/>
    <property type="match status" value="1"/>
</dbReference>
<dbReference type="SUPFAM" id="SSF51391">
    <property type="entry name" value="Thiamin phosphate synthase"/>
    <property type="match status" value="1"/>
</dbReference>
<gene>
    <name evidence="1" type="primary">thiE</name>
    <name type="ordered locus">gbs0860</name>
</gene>
<reference key="1">
    <citation type="journal article" date="2002" name="Mol. Microbiol.">
        <title>Genome sequence of Streptococcus agalactiae, a pathogen causing invasive neonatal disease.</title>
        <authorList>
            <person name="Glaser P."/>
            <person name="Rusniok C."/>
            <person name="Buchrieser C."/>
            <person name="Chevalier F."/>
            <person name="Frangeul L."/>
            <person name="Msadek T."/>
            <person name="Zouine M."/>
            <person name="Couve E."/>
            <person name="Lalioui L."/>
            <person name="Poyart C."/>
            <person name="Trieu-Cuot P."/>
            <person name="Kunst F."/>
        </authorList>
    </citation>
    <scope>NUCLEOTIDE SEQUENCE [LARGE SCALE GENOMIC DNA]</scope>
    <source>
        <strain>NEM316</strain>
    </source>
</reference>
<name>THIE_STRA3</name>
<protein>
    <recommendedName>
        <fullName evidence="1">Thiamine-phosphate synthase</fullName>
        <shortName evidence="1">TP synthase</shortName>
        <shortName evidence="1">TPS</shortName>
        <ecNumber evidence="1">2.5.1.3</ecNumber>
    </recommendedName>
    <alternativeName>
        <fullName evidence="1">Thiamine-phosphate pyrophosphorylase</fullName>
        <shortName evidence="1">TMP pyrophosphorylase</shortName>
        <shortName evidence="1">TMP-PPase</shortName>
    </alternativeName>
</protein>
<evidence type="ECO:0000255" key="1">
    <source>
        <dbReference type="HAMAP-Rule" id="MF_00097"/>
    </source>
</evidence>
<comment type="function">
    <text evidence="1">Condenses 4-methyl-5-(beta-hydroxyethyl)thiazole monophosphate (THZ-P) and 2-methyl-4-amino-5-hydroxymethyl pyrimidine pyrophosphate (HMP-PP) to form thiamine monophosphate (TMP).</text>
</comment>
<comment type="catalytic activity">
    <reaction evidence="1">
        <text>2-[(2R,5Z)-2-carboxy-4-methylthiazol-5(2H)-ylidene]ethyl phosphate + 4-amino-2-methyl-5-(diphosphooxymethyl)pyrimidine + 2 H(+) = thiamine phosphate + CO2 + diphosphate</text>
        <dbReference type="Rhea" id="RHEA:47844"/>
        <dbReference type="ChEBI" id="CHEBI:15378"/>
        <dbReference type="ChEBI" id="CHEBI:16526"/>
        <dbReference type="ChEBI" id="CHEBI:33019"/>
        <dbReference type="ChEBI" id="CHEBI:37575"/>
        <dbReference type="ChEBI" id="CHEBI:57841"/>
        <dbReference type="ChEBI" id="CHEBI:62899"/>
        <dbReference type="EC" id="2.5.1.3"/>
    </reaction>
</comment>
<comment type="catalytic activity">
    <reaction evidence="1">
        <text>2-(2-carboxy-4-methylthiazol-5-yl)ethyl phosphate + 4-amino-2-methyl-5-(diphosphooxymethyl)pyrimidine + 2 H(+) = thiamine phosphate + CO2 + diphosphate</text>
        <dbReference type="Rhea" id="RHEA:47848"/>
        <dbReference type="ChEBI" id="CHEBI:15378"/>
        <dbReference type="ChEBI" id="CHEBI:16526"/>
        <dbReference type="ChEBI" id="CHEBI:33019"/>
        <dbReference type="ChEBI" id="CHEBI:37575"/>
        <dbReference type="ChEBI" id="CHEBI:57841"/>
        <dbReference type="ChEBI" id="CHEBI:62890"/>
        <dbReference type="EC" id="2.5.1.3"/>
    </reaction>
</comment>
<comment type="catalytic activity">
    <reaction evidence="1">
        <text>4-methyl-5-(2-phosphooxyethyl)-thiazole + 4-amino-2-methyl-5-(diphosphooxymethyl)pyrimidine + H(+) = thiamine phosphate + diphosphate</text>
        <dbReference type="Rhea" id="RHEA:22328"/>
        <dbReference type="ChEBI" id="CHEBI:15378"/>
        <dbReference type="ChEBI" id="CHEBI:33019"/>
        <dbReference type="ChEBI" id="CHEBI:37575"/>
        <dbReference type="ChEBI" id="CHEBI:57841"/>
        <dbReference type="ChEBI" id="CHEBI:58296"/>
        <dbReference type="EC" id="2.5.1.3"/>
    </reaction>
</comment>
<comment type="cofactor">
    <cofactor evidence="1">
        <name>Mg(2+)</name>
        <dbReference type="ChEBI" id="CHEBI:18420"/>
    </cofactor>
    <text evidence="1">Binds 1 Mg(2+) ion per subunit.</text>
</comment>
<comment type="pathway">
    <text evidence="1">Cofactor biosynthesis; thiamine diphosphate biosynthesis; thiamine phosphate from 4-amino-2-methyl-5-diphosphomethylpyrimidine and 4-methyl-5-(2-phosphoethyl)-thiazole: step 1/1.</text>
</comment>
<comment type="similarity">
    <text evidence="1">Belongs to the thiamine-phosphate synthase family.</text>
</comment>